<gene>
    <name evidence="1" type="primary">rplP</name>
    <name type="ordered locus">mlr0301</name>
</gene>
<keyword id="KW-0687">Ribonucleoprotein</keyword>
<keyword id="KW-0689">Ribosomal protein</keyword>
<keyword id="KW-0694">RNA-binding</keyword>
<keyword id="KW-0699">rRNA-binding</keyword>
<keyword id="KW-0820">tRNA-binding</keyword>
<evidence type="ECO:0000255" key="1">
    <source>
        <dbReference type="HAMAP-Rule" id="MF_01342"/>
    </source>
</evidence>
<evidence type="ECO:0000305" key="2"/>
<accession>Q98N50</accession>
<dbReference type="EMBL" id="BA000012">
    <property type="protein sequence ID" value="BAB47913.1"/>
    <property type="molecule type" value="Genomic_DNA"/>
</dbReference>
<dbReference type="RefSeq" id="WP_010909279.1">
    <property type="nucleotide sequence ID" value="NC_002678.2"/>
</dbReference>
<dbReference type="SMR" id="Q98N50"/>
<dbReference type="GeneID" id="66684209"/>
<dbReference type="KEGG" id="mlo:mlr0301"/>
<dbReference type="eggNOG" id="COG0197">
    <property type="taxonomic scope" value="Bacteria"/>
</dbReference>
<dbReference type="HOGENOM" id="CLU_078858_2_1_5"/>
<dbReference type="Proteomes" id="UP000000552">
    <property type="component" value="Chromosome"/>
</dbReference>
<dbReference type="GO" id="GO:0022625">
    <property type="term" value="C:cytosolic large ribosomal subunit"/>
    <property type="evidence" value="ECO:0007669"/>
    <property type="project" value="TreeGrafter"/>
</dbReference>
<dbReference type="GO" id="GO:0019843">
    <property type="term" value="F:rRNA binding"/>
    <property type="evidence" value="ECO:0007669"/>
    <property type="project" value="UniProtKB-UniRule"/>
</dbReference>
<dbReference type="GO" id="GO:0003735">
    <property type="term" value="F:structural constituent of ribosome"/>
    <property type="evidence" value="ECO:0007669"/>
    <property type="project" value="InterPro"/>
</dbReference>
<dbReference type="GO" id="GO:0000049">
    <property type="term" value="F:tRNA binding"/>
    <property type="evidence" value="ECO:0007669"/>
    <property type="project" value="UniProtKB-KW"/>
</dbReference>
<dbReference type="GO" id="GO:0006412">
    <property type="term" value="P:translation"/>
    <property type="evidence" value="ECO:0007669"/>
    <property type="project" value="UniProtKB-UniRule"/>
</dbReference>
<dbReference type="CDD" id="cd01433">
    <property type="entry name" value="Ribosomal_L16_L10e"/>
    <property type="match status" value="1"/>
</dbReference>
<dbReference type="FunFam" id="3.90.1170.10:FF:000001">
    <property type="entry name" value="50S ribosomal protein L16"/>
    <property type="match status" value="1"/>
</dbReference>
<dbReference type="Gene3D" id="3.90.1170.10">
    <property type="entry name" value="Ribosomal protein L10e/L16"/>
    <property type="match status" value="1"/>
</dbReference>
<dbReference type="HAMAP" id="MF_01342">
    <property type="entry name" value="Ribosomal_uL16"/>
    <property type="match status" value="1"/>
</dbReference>
<dbReference type="InterPro" id="IPR047873">
    <property type="entry name" value="Ribosomal_uL16"/>
</dbReference>
<dbReference type="InterPro" id="IPR000114">
    <property type="entry name" value="Ribosomal_uL16_bact-type"/>
</dbReference>
<dbReference type="InterPro" id="IPR020798">
    <property type="entry name" value="Ribosomal_uL16_CS"/>
</dbReference>
<dbReference type="InterPro" id="IPR016180">
    <property type="entry name" value="Ribosomal_uL16_dom"/>
</dbReference>
<dbReference type="InterPro" id="IPR036920">
    <property type="entry name" value="Ribosomal_uL16_sf"/>
</dbReference>
<dbReference type="NCBIfam" id="TIGR01164">
    <property type="entry name" value="rplP_bact"/>
    <property type="match status" value="1"/>
</dbReference>
<dbReference type="PANTHER" id="PTHR12220">
    <property type="entry name" value="50S/60S RIBOSOMAL PROTEIN L16"/>
    <property type="match status" value="1"/>
</dbReference>
<dbReference type="PANTHER" id="PTHR12220:SF13">
    <property type="entry name" value="LARGE RIBOSOMAL SUBUNIT PROTEIN UL16M"/>
    <property type="match status" value="1"/>
</dbReference>
<dbReference type="Pfam" id="PF00252">
    <property type="entry name" value="Ribosomal_L16"/>
    <property type="match status" value="1"/>
</dbReference>
<dbReference type="PRINTS" id="PR00060">
    <property type="entry name" value="RIBOSOMALL16"/>
</dbReference>
<dbReference type="SUPFAM" id="SSF54686">
    <property type="entry name" value="Ribosomal protein L16p/L10e"/>
    <property type="match status" value="1"/>
</dbReference>
<dbReference type="PROSITE" id="PS00586">
    <property type="entry name" value="RIBOSOMAL_L16_1"/>
    <property type="match status" value="1"/>
</dbReference>
<dbReference type="PROSITE" id="PS00701">
    <property type="entry name" value="RIBOSOMAL_L16_2"/>
    <property type="match status" value="1"/>
</dbReference>
<protein>
    <recommendedName>
        <fullName evidence="1">Large ribosomal subunit protein uL16</fullName>
    </recommendedName>
    <alternativeName>
        <fullName evidence="2">50S ribosomal protein L16</fullName>
    </alternativeName>
</protein>
<organism>
    <name type="scientific">Mesorhizobium japonicum (strain LMG 29417 / CECT 9101 / MAFF 303099)</name>
    <name type="common">Mesorhizobium loti (strain MAFF 303099)</name>
    <dbReference type="NCBI Taxonomy" id="266835"/>
    <lineage>
        <taxon>Bacteria</taxon>
        <taxon>Pseudomonadati</taxon>
        <taxon>Pseudomonadota</taxon>
        <taxon>Alphaproteobacteria</taxon>
        <taxon>Hyphomicrobiales</taxon>
        <taxon>Phyllobacteriaceae</taxon>
        <taxon>Mesorhizobium</taxon>
    </lineage>
</organism>
<reference key="1">
    <citation type="journal article" date="2000" name="DNA Res.">
        <title>Complete genome structure of the nitrogen-fixing symbiotic bacterium Mesorhizobium loti.</title>
        <authorList>
            <person name="Kaneko T."/>
            <person name="Nakamura Y."/>
            <person name="Sato S."/>
            <person name="Asamizu E."/>
            <person name="Kato T."/>
            <person name="Sasamoto S."/>
            <person name="Watanabe A."/>
            <person name="Idesawa K."/>
            <person name="Ishikawa A."/>
            <person name="Kawashima K."/>
            <person name="Kimura T."/>
            <person name="Kishida Y."/>
            <person name="Kiyokawa C."/>
            <person name="Kohara M."/>
            <person name="Matsumoto M."/>
            <person name="Matsuno A."/>
            <person name="Mochizuki Y."/>
            <person name="Nakayama S."/>
            <person name="Nakazaki N."/>
            <person name="Shimpo S."/>
            <person name="Sugimoto M."/>
            <person name="Takeuchi C."/>
            <person name="Yamada M."/>
            <person name="Tabata S."/>
        </authorList>
    </citation>
    <scope>NUCLEOTIDE SEQUENCE [LARGE SCALE GENOMIC DNA]</scope>
    <source>
        <strain>LMG 29417 / CECT 9101 / MAFF 303099</strain>
    </source>
</reference>
<feature type="chain" id="PRO_0000062182" description="Large ribosomal subunit protein uL16">
    <location>
        <begin position="1"/>
        <end position="137"/>
    </location>
</feature>
<name>RL16_RHILO</name>
<sequence length="137" mass="15437">MLQPKRTKFRKQFKGRIHGTAKGGTNLDFGGFGLKALEPNRVTAREIEAARRAITREMKRAGRVWIRIFPDLPVTSKPTEVRMGKGKGAVDYWAARVKPGRIMFEIDGVSEETAREALRLGAAKLSVRTRFVQRIAE</sequence>
<comment type="function">
    <text evidence="1">Binds 23S rRNA and is also seen to make contacts with the A and possibly P site tRNAs.</text>
</comment>
<comment type="subunit">
    <text evidence="1">Part of the 50S ribosomal subunit.</text>
</comment>
<comment type="similarity">
    <text evidence="1">Belongs to the universal ribosomal protein uL16 family.</text>
</comment>
<proteinExistence type="inferred from homology"/>